<gene>
    <name evidence="1" type="primary">leuD</name>
    <name type="ordered locus">Rsph17029_2521</name>
</gene>
<keyword id="KW-0028">Amino-acid biosynthesis</keyword>
<keyword id="KW-0100">Branched-chain amino acid biosynthesis</keyword>
<keyword id="KW-0432">Leucine biosynthesis</keyword>
<keyword id="KW-0456">Lyase</keyword>
<reference key="1">
    <citation type="submission" date="2007-02" db="EMBL/GenBank/DDBJ databases">
        <title>Complete sequence of chromosome 1 of Rhodobacter sphaeroides ATCC 17029.</title>
        <authorList>
            <person name="Copeland A."/>
            <person name="Lucas S."/>
            <person name="Lapidus A."/>
            <person name="Barry K."/>
            <person name="Detter J.C."/>
            <person name="Glavina del Rio T."/>
            <person name="Hammon N."/>
            <person name="Israni S."/>
            <person name="Dalin E."/>
            <person name="Tice H."/>
            <person name="Pitluck S."/>
            <person name="Kiss H."/>
            <person name="Brettin T."/>
            <person name="Bruce D."/>
            <person name="Han C."/>
            <person name="Tapia R."/>
            <person name="Gilna P."/>
            <person name="Schmutz J."/>
            <person name="Larimer F."/>
            <person name="Land M."/>
            <person name="Hauser L."/>
            <person name="Kyrpides N."/>
            <person name="Mikhailova N."/>
            <person name="Richardson P."/>
            <person name="Mackenzie C."/>
            <person name="Choudhary M."/>
            <person name="Donohue T.J."/>
            <person name="Kaplan S."/>
        </authorList>
    </citation>
    <scope>NUCLEOTIDE SEQUENCE [LARGE SCALE GENOMIC DNA]</scope>
    <source>
        <strain>ATCC 17029 / ATH 2.4.9</strain>
    </source>
</reference>
<proteinExistence type="inferred from homology"/>
<sequence length="201" mass="22397">MQEFTKVTGVAAPMPLVNIDTDMIIPKQFLKTIQRSGLGKNLFDEMRYNPDGSEIPEFVLNQPAYRDAQIIVAGDNFGCGSSREHAPWALLDFGIRCVISTSFADIFYNNCFKNGILPIVMPPEVVEVLMEDARRGANARMTVDLEAQTVTTSDGQSFPFQVDSFRRHCLMNGLDDIGLTLEKAASIDGFERDLATLRPWV</sequence>
<feature type="chain" id="PRO_1000063820" description="3-isopropylmalate dehydratase small subunit">
    <location>
        <begin position="1"/>
        <end position="201"/>
    </location>
</feature>
<dbReference type="EC" id="4.2.1.33" evidence="1"/>
<dbReference type="EMBL" id="CP000577">
    <property type="protein sequence ID" value="ABN77623.1"/>
    <property type="molecule type" value="Genomic_DNA"/>
</dbReference>
<dbReference type="RefSeq" id="WP_002721055.1">
    <property type="nucleotide sequence ID" value="NC_009049.1"/>
</dbReference>
<dbReference type="SMR" id="A3PMQ7"/>
<dbReference type="GeneID" id="3718215"/>
<dbReference type="KEGG" id="rsh:Rsph17029_2521"/>
<dbReference type="HOGENOM" id="CLU_081378_0_3_5"/>
<dbReference type="UniPathway" id="UPA00048">
    <property type="reaction ID" value="UER00071"/>
</dbReference>
<dbReference type="GO" id="GO:0009316">
    <property type="term" value="C:3-isopropylmalate dehydratase complex"/>
    <property type="evidence" value="ECO:0007669"/>
    <property type="project" value="InterPro"/>
</dbReference>
<dbReference type="GO" id="GO:0003861">
    <property type="term" value="F:3-isopropylmalate dehydratase activity"/>
    <property type="evidence" value="ECO:0007669"/>
    <property type="project" value="UniProtKB-UniRule"/>
</dbReference>
<dbReference type="GO" id="GO:0009098">
    <property type="term" value="P:L-leucine biosynthetic process"/>
    <property type="evidence" value="ECO:0007669"/>
    <property type="project" value="UniProtKB-UniRule"/>
</dbReference>
<dbReference type="CDD" id="cd01577">
    <property type="entry name" value="IPMI_Swivel"/>
    <property type="match status" value="1"/>
</dbReference>
<dbReference type="FunFam" id="3.20.19.10:FF:000003">
    <property type="entry name" value="3-isopropylmalate dehydratase small subunit"/>
    <property type="match status" value="1"/>
</dbReference>
<dbReference type="Gene3D" id="3.20.19.10">
    <property type="entry name" value="Aconitase, domain 4"/>
    <property type="match status" value="1"/>
</dbReference>
<dbReference type="HAMAP" id="MF_01031">
    <property type="entry name" value="LeuD_type1"/>
    <property type="match status" value="1"/>
</dbReference>
<dbReference type="InterPro" id="IPR004431">
    <property type="entry name" value="3-IsopropMal_deHydase_ssu"/>
</dbReference>
<dbReference type="InterPro" id="IPR015928">
    <property type="entry name" value="Aconitase/3IPM_dehydase_swvl"/>
</dbReference>
<dbReference type="InterPro" id="IPR000573">
    <property type="entry name" value="AconitaseA/IPMdHydase_ssu_swvl"/>
</dbReference>
<dbReference type="InterPro" id="IPR033940">
    <property type="entry name" value="IPMI_Swivel"/>
</dbReference>
<dbReference type="InterPro" id="IPR050075">
    <property type="entry name" value="LeuD"/>
</dbReference>
<dbReference type="NCBIfam" id="TIGR00171">
    <property type="entry name" value="leuD"/>
    <property type="match status" value="1"/>
</dbReference>
<dbReference type="NCBIfam" id="NF002458">
    <property type="entry name" value="PRK01641.1"/>
    <property type="match status" value="1"/>
</dbReference>
<dbReference type="PANTHER" id="PTHR43345:SF5">
    <property type="entry name" value="3-ISOPROPYLMALATE DEHYDRATASE SMALL SUBUNIT"/>
    <property type="match status" value="1"/>
</dbReference>
<dbReference type="PANTHER" id="PTHR43345">
    <property type="entry name" value="3-ISOPROPYLMALATE DEHYDRATASE SMALL SUBUNIT 2-RELATED-RELATED"/>
    <property type="match status" value="1"/>
</dbReference>
<dbReference type="Pfam" id="PF00694">
    <property type="entry name" value="Aconitase_C"/>
    <property type="match status" value="1"/>
</dbReference>
<dbReference type="SUPFAM" id="SSF52016">
    <property type="entry name" value="LeuD/IlvD-like"/>
    <property type="match status" value="1"/>
</dbReference>
<protein>
    <recommendedName>
        <fullName evidence="1">3-isopropylmalate dehydratase small subunit</fullName>
        <ecNumber evidence="1">4.2.1.33</ecNumber>
    </recommendedName>
    <alternativeName>
        <fullName evidence="1">Alpha-IPM isomerase</fullName>
        <shortName evidence="1">IPMI</shortName>
    </alternativeName>
    <alternativeName>
        <fullName evidence="1">Isopropylmalate isomerase</fullName>
    </alternativeName>
</protein>
<evidence type="ECO:0000255" key="1">
    <source>
        <dbReference type="HAMAP-Rule" id="MF_01031"/>
    </source>
</evidence>
<accession>A3PMQ7</accession>
<comment type="function">
    <text evidence="1">Catalyzes the isomerization between 2-isopropylmalate and 3-isopropylmalate, via the formation of 2-isopropylmaleate.</text>
</comment>
<comment type="catalytic activity">
    <reaction evidence="1">
        <text>(2R,3S)-3-isopropylmalate = (2S)-2-isopropylmalate</text>
        <dbReference type="Rhea" id="RHEA:32287"/>
        <dbReference type="ChEBI" id="CHEBI:1178"/>
        <dbReference type="ChEBI" id="CHEBI:35121"/>
        <dbReference type="EC" id="4.2.1.33"/>
    </reaction>
</comment>
<comment type="pathway">
    <text evidence="1">Amino-acid biosynthesis; L-leucine biosynthesis; L-leucine from 3-methyl-2-oxobutanoate: step 2/4.</text>
</comment>
<comment type="subunit">
    <text evidence="1">Heterodimer of LeuC and LeuD.</text>
</comment>
<comment type="similarity">
    <text evidence="1">Belongs to the LeuD family. LeuD type 1 subfamily.</text>
</comment>
<organism>
    <name type="scientific">Cereibacter sphaeroides (strain ATCC 17029 / ATH 2.4.9)</name>
    <name type="common">Rhodobacter sphaeroides</name>
    <dbReference type="NCBI Taxonomy" id="349101"/>
    <lineage>
        <taxon>Bacteria</taxon>
        <taxon>Pseudomonadati</taxon>
        <taxon>Pseudomonadota</taxon>
        <taxon>Alphaproteobacteria</taxon>
        <taxon>Rhodobacterales</taxon>
        <taxon>Paracoccaceae</taxon>
        <taxon>Cereibacter</taxon>
    </lineage>
</organism>
<name>LEUD_CERS1</name>